<evidence type="ECO:0000255" key="1">
    <source>
        <dbReference type="PROSITE-ProRule" id="PRU00303"/>
    </source>
</evidence>
<feature type="signal peptide" evidence="1">
    <location>
        <begin position="1"/>
        <end position="25"/>
    </location>
</feature>
<feature type="chain" id="PRO_0000018132" description="Putative lipoprotein LpqV">
    <location>
        <begin position="26"/>
        <end position="139"/>
    </location>
</feature>
<feature type="lipid moiety-binding region" description="N-palmitoyl cysteine" evidence="1">
    <location>
        <position position="26"/>
    </location>
</feature>
<feature type="lipid moiety-binding region" description="S-diacylglycerol cysteine" evidence="1">
    <location>
        <position position="26"/>
    </location>
</feature>
<comment type="subcellular location">
    <subcellularLocation>
        <location evidence="1">Cell membrane</location>
        <topology evidence="1">Lipid-anchor</topology>
    </subcellularLocation>
</comment>
<gene>
    <name type="primary">lpqV</name>
    <name type="ordered locus">BQ2027_MB1093C</name>
</gene>
<keyword id="KW-1003">Cell membrane</keyword>
<keyword id="KW-0449">Lipoprotein</keyword>
<keyword id="KW-0472">Membrane</keyword>
<keyword id="KW-0564">Palmitate</keyword>
<keyword id="KW-1185">Reference proteome</keyword>
<keyword id="KW-0732">Signal</keyword>
<reference key="1">
    <citation type="journal article" date="2003" name="Proc. Natl. Acad. Sci. U.S.A.">
        <title>The complete genome sequence of Mycobacterium bovis.</title>
        <authorList>
            <person name="Garnier T."/>
            <person name="Eiglmeier K."/>
            <person name="Camus J.-C."/>
            <person name="Medina N."/>
            <person name="Mansoor H."/>
            <person name="Pryor M."/>
            <person name="Duthoy S."/>
            <person name="Grondin S."/>
            <person name="Lacroix C."/>
            <person name="Monsempe C."/>
            <person name="Simon S."/>
            <person name="Harris B."/>
            <person name="Atkin R."/>
            <person name="Doggett J."/>
            <person name="Mayes R."/>
            <person name="Keating L."/>
            <person name="Wheeler P.R."/>
            <person name="Parkhill J."/>
            <person name="Barrell B.G."/>
            <person name="Cole S.T."/>
            <person name="Gordon S.V."/>
            <person name="Hewinson R.G."/>
        </authorList>
    </citation>
    <scope>NUCLEOTIDE SEQUENCE [LARGE SCALE GENOMIC DNA]</scope>
    <source>
        <strain>ATCC BAA-935 / AF2122/97</strain>
    </source>
</reference>
<reference key="2">
    <citation type="journal article" date="2017" name="Genome Announc.">
        <title>Updated reference genome sequence and annotation of Mycobacterium bovis AF2122/97.</title>
        <authorList>
            <person name="Malone K.M."/>
            <person name="Farrell D."/>
            <person name="Stuber T.P."/>
            <person name="Schubert O.T."/>
            <person name="Aebersold R."/>
            <person name="Robbe-Austerman S."/>
            <person name="Gordon S.V."/>
        </authorList>
    </citation>
    <scope>NUCLEOTIDE SEQUENCE [LARGE SCALE GENOMIC DNA]</scope>
    <scope>GENOME REANNOTATION</scope>
    <source>
        <strain>ATCC BAA-935 / AF2122/97</strain>
    </source>
</reference>
<accession>P65311</accession>
<accession>A0A1R3XZD3</accession>
<accession>O53412</accession>
<accession>X2BGU0</accession>
<dbReference type="EMBL" id="LT708304">
    <property type="protein sequence ID" value="SIT99692.1"/>
    <property type="molecule type" value="Genomic_DNA"/>
</dbReference>
<dbReference type="RefSeq" id="NP_854748.1">
    <property type="nucleotide sequence ID" value="NC_002945.3"/>
</dbReference>
<dbReference type="RefSeq" id="WP_003405645.1">
    <property type="nucleotide sequence ID" value="NC_002945.4"/>
</dbReference>
<dbReference type="KEGG" id="mbo:BQ2027_MB1093C"/>
<dbReference type="PATRIC" id="fig|233413.5.peg.1191"/>
<dbReference type="Proteomes" id="UP000001419">
    <property type="component" value="Chromosome"/>
</dbReference>
<dbReference type="GO" id="GO:0005886">
    <property type="term" value="C:plasma membrane"/>
    <property type="evidence" value="ECO:0007669"/>
    <property type="project" value="UniProtKB-SubCell"/>
</dbReference>
<dbReference type="InterPro" id="IPR020377">
    <property type="entry name" value="Uncharacterised_LpqV"/>
</dbReference>
<dbReference type="Pfam" id="PF17301">
    <property type="entry name" value="LpqV"/>
    <property type="match status" value="1"/>
</dbReference>
<dbReference type="PROSITE" id="PS51257">
    <property type="entry name" value="PROKAR_LIPOPROTEIN"/>
    <property type="match status" value="1"/>
</dbReference>
<name>LPQV_MYCBO</name>
<sequence length="139" mass="14110">MRPSRYAPLLCAMVLALAWLSAVAGCSRGGSSKAGRSSSVAGTLPAGVVGVSPAGVTTRVDAPAESTEEEYYQACHAARLWMDAQPGSGESLIEPYLAVVQASPSGVAGSWHIRWAALTPARQAAVIVAARAAANAECG</sequence>
<proteinExistence type="inferred from homology"/>
<protein>
    <recommendedName>
        <fullName>Putative lipoprotein LpqV</fullName>
    </recommendedName>
</protein>
<organism>
    <name type="scientific">Mycobacterium bovis (strain ATCC BAA-935 / AF2122/97)</name>
    <dbReference type="NCBI Taxonomy" id="233413"/>
    <lineage>
        <taxon>Bacteria</taxon>
        <taxon>Bacillati</taxon>
        <taxon>Actinomycetota</taxon>
        <taxon>Actinomycetes</taxon>
        <taxon>Mycobacteriales</taxon>
        <taxon>Mycobacteriaceae</taxon>
        <taxon>Mycobacterium</taxon>
        <taxon>Mycobacterium tuberculosis complex</taxon>
    </lineage>
</organism>